<organism>
    <name type="scientific">Chlamydia trachomatis serovar A (strain ATCC VR-571B / DSM 19440 / HAR-13)</name>
    <dbReference type="NCBI Taxonomy" id="315277"/>
    <lineage>
        <taxon>Bacteria</taxon>
        <taxon>Pseudomonadati</taxon>
        <taxon>Chlamydiota</taxon>
        <taxon>Chlamydiia</taxon>
        <taxon>Chlamydiales</taxon>
        <taxon>Chlamydiaceae</taxon>
        <taxon>Chlamydia/Chlamydophila group</taxon>
        <taxon>Chlamydia</taxon>
    </lineage>
</organism>
<proteinExistence type="inferred from homology"/>
<name>RUVB_CHLTA</name>
<gene>
    <name evidence="1" type="primary">ruvB</name>
    <name type="ordered locus">CTA_0044</name>
</gene>
<reference key="1">
    <citation type="journal article" date="2005" name="Infect. Immun.">
        <title>Comparative genomic analysis of Chlamydia trachomatis oculotropic and genitotropic strains.</title>
        <authorList>
            <person name="Carlson J.H."/>
            <person name="Porcella S.F."/>
            <person name="McClarty G."/>
            <person name="Caldwell H.D."/>
        </authorList>
    </citation>
    <scope>NUCLEOTIDE SEQUENCE [LARGE SCALE GENOMIC DNA]</scope>
    <source>
        <strain>ATCC VR-571B / DSM 19440 / HAR-13</strain>
    </source>
</reference>
<comment type="function">
    <text evidence="1">The RuvA-RuvB-RuvC complex processes Holliday junction (HJ) DNA during genetic recombination and DNA repair, while the RuvA-RuvB complex plays an important role in the rescue of blocked DNA replication forks via replication fork reversal (RFR). RuvA specifically binds to HJ cruciform DNA, conferring on it an open structure. The RuvB hexamer acts as an ATP-dependent pump, pulling dsDNA into and through the RuvAB complex. RuvB forms 2 homohexamers on either side of HJ DNA bound by 1 or 2 RuvA tetramers; 4 subunits per hexamer contact DNA at a time. Coordinated motions by a converter formed by DNA-disengaged RuvB subunits stimulates ATP hydrolysis and nucleotide exchange. Immobilization of the converter enables RuvB to convert the ATP-contained energy into a lever motion, pulling 2 nucleotides of DNA out of the RuvA tetramer per ATP hydrolyzed, thus driving DNA branch migration. The RuvB motors rotate together with the DNA substrate, which together with the progressing nucleotide cycle form the mechanistic basis for DNA recombination by continuous HJ branch migration. Branch migration allows RuvC to scan DNA until it finds its consensus sequence, where it cleaves and resolves cruciform DNA.</text>
</comment>
<comment type="catalytic activity">
    <reaction evidence="1">
        <text>ATP + H2O = ADP + phosphate + H(+)</text>
        <dbReference type="Rhea" id="RHEA:13065"/>
        <dbReference type="ChEBI" id="CHEBI:15377"/>
        <dbReference type="ChEBI" id="CHEBI:15378"/>
        <dbReference type="ChEBI" id="CHEBI:30616"/>
        <dbReference type="ChEBI" id="CHEBI:43474"/>
        <dbReference type="ChEBI" id="CHEBI:456216"/>
    </reaction>
</comment>
<comment type="subunit">
    <text evidence="1">Homohexamer. Forms an RuvA(8)-RuvB(12)-Holliday junction (HJ) complex. HJ DNA is sandwiched between 2 RuvA tetramers; dsDNA enters through RuvA and exits via RuvB. An RuvB hexamer assembles on each DNA strand where it exits the tetramer. Each RuvB hexamer is contacted by two RuvA subunits (via domain III) on 2 adjacent RuvB subunits; this complex drives branch migration. In the full resolvosome a probable DNA-RuvA(4)-RuvB(12)-RuvC(2) complex forms which resolves the HJ.</text>
</comment>
<comment type="subcellular location">
    <subcellularLocation>
        <location evidence="1">Cytoplasm</location>
    </subcellularLocation>
</comment>
<comment type="domain">
    <text evidence="1">Has 3 domains, the large (RuvB-L) and small ATPase (RuvB-S) domains and the C-terminal head (RuvB-H) domain. The head domain binds DNA, while the ATPase domains jointly bind ATP, ADP or are empty depending on the state of the subunit in the translocation cycle. During a single DNA translocation step the structure of each domain remains the same, but their relative positions change.</text>
</comment>
<comment type="similarity">
    <text evidence="1">Belongs to the RuvB family.</text>
</comment>
<sequence length="334" mass="37305">MTHKISVLHQDKKFDFSLRPKKLTEFCGQKQLKERLDLFLRAAVQRNEVPGHCLFYGPPGLGKTSLAHIMANTIGKGLVIASGPQLLKPSDLIGLLTGLQEGDIFFIDEIHRMGKAAEEYLYPAMEDFKVDITLDSGPGARSVRLDLAPFTLVGATTRAGMLSEPLRTRFAFTGRVDYYTDEDLVSILSRSSQLLSIEANQETLLEIARRARGTPRLANNLLRWVRDFAQMREGNCINSAVAEKALAMLLIDNLGLNEIDIKLLSVMIDFYQGGPVGMKTLAMAVGEDVRTLEDMYEPFLILKGLVQRTARGRVATPLAYEHLNRNPKDRWGEE</sequence>
<accession>Q3KMY1</accession>
<feature type="chain" id="PRO_0000235357" description="Holliday junction branch migration complex subunit RuvB">
    <location>
        <begin position="1"/>
        <end position="334"/>
    </location>
</feature>
<feature type="region of interest" description="Large ATPase domain (RuvB-L)" evidence="1">
    <location>
        <begin position="1"/>
        <end position="179"/>
    </location>
</feature>
<feature type="region of interest" description="Small ATPAse domain (RuvB-S)" evidence="1">
    <location>
        <begin position="180"/>
        <end position="250"/>
    </location>
</feature>
<feature type="region of interest" description="Head domain (RuvB-H)" evidence="1">
    <location>
        <begin position="253"/>
        <end position="334"/>
    </location>
</feature>
<feature type="binding site" evidence="1">
    <location>
        <position position="18"/>
    </location>
    <ligand>
        <name>ATP</name>
        <dbReference type="ChEBI" id="CHEBI:30616"/>
    </ligand>
</feature>
<feature type="binding site" evidence="1">
    <location>
        <position position="19"/>
    </location>
    <ligand>
        <name>ATP</name>
        <dbReference type="ChEBI" id="CHEBI:30616"/>
    </ligand>
</feature>
<feature type="binding site" evidence="1">
    <location>
        <position position="60"/>
    </location>
    <ligand>
        <name>ATP</name>
        <dbReference type="ChEBI" id="CHEBI:30616"/>
    </ligand>
</feature>
<feature type="binding site" evidence="1">
    <location>
        <position position="63"/>
    </location>
    <ligand>
        <name>ATP</name>
        <dbReference type="ChEBI" id="CHEBI:30616"/>
    </ligand>
</feature>
<feature type="binding site" evidence="1">
    <location>
        <position position="64"/>
    </location>
    <ligand>
        <name>ATP</name>
        <dbReference type="ChEBI" id="CHEBI:30616"/>
    </ligand>
</feature>
<feature type="binding site" evidence="1">
    <location>
        <position position="64"/>
    </location>
    <ligand>
        <name>Mg(2+)</name>
        <dbReference type="ChEBI" id="CHEBI:18420"/>
    </ligand>
</feature>
<feature type="binding site" evidence="1">
    <location>
        <position position="65"/>
    </location>
    <ligand>
        <name>ATP</name>
        <dbReference type="ChEBI" id="CHEBI:30616"/>
    </ligand>
</feature>
<feature type="binding site" evidence="1">
    <location>
        <begin position="126"/>
        <end position="128"/>
    </location>
    <ligand>
        <name>ATP</name>
        <dbReference type="ChEBI" id="CHEBI:30616"/>
    </ligand>
</feature>
<feature type="binding site" evidence="1">
    <location>
        <position position="169"/>
    </location>
    <ligand>
        <name>ATP</name>
        <dbReference type="ChEBI" id="CHEBI:30616"/>
    </ligand>
</feature>
<feature type="binding site" evidence="1">
    <location>
        <position position="179"/>
    </location>
    <ligand>
        <name>ATP</name>
        <dbReference type="ChEBI" id="CHEBI:30616"/>
    </ligand>
</feature>
<feature type="binding site" evidence="1">
    <location>
        <position position="216"/>
    </location>
    <ligand>
        <name>ATP</name>
        <dbReference type="ChEBI" id="CHEBI:30616"/>
    </ligand>
</feature>
<feature type="binding site" evidence="1">
    <location>
        <position position="308"/>
    </location>
    <ligand>
        <name>DNA</name>
        <dbReference type="ChEBI" id="CHEBI:16991"/>
    </ligand>
</feature>
<feature type="binding site" evidence="1">
    <location>
        <position position="313"/>
    </location>
    <ligand>
        <name>DNA</name>
        <dbReference type="ChEBI" id="CHEBI:16991"/>
    </ligand>
</feature>
<protein>
    <recommendedName>
        <fullName evidence="1">Holliday junction branch migration complex subunit RuvB</fullName>
        <ecNumber evidence="1">3.6.4.-</ecNumber>
    </recommendedName>
</protein>
<keyword id="KW-0067">ATP-binding</keyword>
<keyword id="KW-0963">Cytoplasm</keyword>
<keyword id="KW-0227">DNA damage</keyword>
<keyword id="KW-0233">DNA recombination</keyword>
<keyword id="KW-0234">DNA repair</keyword>
<keyword id="KW-0238">DNA-binding</keyword>
<keyword id="KW-0378">Hydrolase</keyword>
<keyword id="KW-0547">Nucleotide-binding</keyword>
<evidence type="ECO:0000255" key="1">
    <source>
        <dbReference type="HAMAP-Rule" id="MF_00016"/>
    </source>
</evidence>
<dbReference type="EC" id="3.6.4.-" evidence="1"/>
<dbReference type="EMBL" id="CP000051">
    <property type="protein sequence ID" value="AAX50291.1"/>
    <property type="molecule type" value="Genomic_DNA"/>
</dbReference>
<dbReference type="RefSeq" id="WP_009872338.1">
    <property type="nucleotide sequence ID" value="NC_007429.1"/>
</dbReference>
<dbReference type="SMR" id="Q3KMY1"/>
<dbReference type="KEGG" id="cta:CTA_0044"/>
<dbReference type="HOGENOM" id="CLU_055599_1_0_0"/>
<dbReference type="Proteomes" id="UP000002532">
    <property type="component" value="Chromosome"/>
</dbReference>
<dbReference type="GO" id="GO:0005737">
    <property type="term" value="C:cytoplasm"/>
    <property type="evidence" value="ECO:0007669"/>
    <property type="project" value="UniProtKB-SubCell"/>
</dbReference>
<dbReference type="GO" id="GO:0048476">
    <property type="term" value="C:Holliday junction resolvase complex"/>
    <property type="evidence" value="ECO:0007669"/>
    <property type="project" value="UniProtKB-UniRule"/>
</dbReference>
<dbReference type="GO" id="GO:0005524">
    <property type="term" value="F:ATP binding"/>
    <property type="evidence" value="ECO:0007669"/>
    <property type="project" value="UniProtKB-UniRule"/>
</dbReference>
<dbReference type="GO" id="GO:0016887">
    <property type="term" value="F:ATP hydrolysis activity"/>
    <property type="evidence" value="ECO:0007669"/>
    <property type="project" value="InterPro"/>
</dbReference>
<dbReference type="GO" id="GO:0000400">
    <property type="term" value="F:four-way junction DNA binding"/>
    <property type="evidence" value="ECO:0007669"/>
    <property type="project" value="UniProtKB-UniRule"/>
</dbReference>
<dbReference type="GO" id="GO:0009378">
    <property type="term" value="F:four-way junction helicase activity"/>
    <property type="evidence" value="ECO:0007669"/>
    <property type="project" value="InterPro"/>
</dbReference>
<dbReference type="GO" id="GO:0006310">
    <property type="term" value="P:DNA recombination"/>
    <property type="evidence" value="ECO:0007669"/>
    <property type="project" value="UniProtKB-UniRule"/>
</dbReference>
<dbReference type="GO" id="GO:0006281">
    <property type="term" value="P:DNA repair"/>
    <property type="evidence" value="ECO:0007669"/>
    <property type="project" value="UniProtKB-UniRule"/>
</dbReference>
<dbReference type="CDD" id="cd00009">
    <property type="entry name" value="AAA"/>
    <property type="match status" value="1"/>
</dbReference>
<dbReference type="Gene3D" id="1.10.8.60">
    <property type="match status" value="1"/>
</dbReference>
<dbReference type="Gene3D" id="3.40.50.300">
    <property type="entry name" value="P-loop containing nucleotide triphosphate hydrolases"/>
    <property type="match status" value="1"/>
</dbReference>
<dbReference type="Gene3D" id="1.10.10.10">
    <property type="entry name" value="Winged helix-like DNA-binding domain superfamily/Winged helix DNA-binding domain"/>
    <property type="match status" value="1"/>
</dbReference>
<dbReference type="HAMAP" id="MF_00016">
    <property type="entry name" value="DNA_HJ_migration_RuvB"/>
    <property type="match status" value="1"/>
</dbReference>
<dbReference type="InterPro" id="IPR003593">
    <property type="entry name" value="AAA+_ATPase"/>
</dbReference>
<dbReference type="InterPro" id="IPR041445">
    <property type="entry name" value="AAA_lid_4"/>
</dbReference>
<dbReference type="InterPro" id="IPR004605">
    <property type="entry name" value="DNA_helicase_Holl-junc_RuvB"/>
</dbReference>
<dbReference type="InterPro" id="IPR027417">
    <property type="entry name" value="P-loop_NTPase"/>
</dbReference>
<dbReference type="InterPro" id="IPR008824">
    <property type="entry name" value="RuvB-like_N"/>
</dbReference>
<dbReference type="InterPro" id="IPR008823">
    <property type="entry name" value="RuvB_C"/>
</dbReference>
<dbReference type="InterPro" id="IPR036388">
    <property type="entry name" value="WH-like_DNA-bd_sf"/>
</dbReference>
<dbReference type="InterPro" id="IPR036390">
    <property type="entry name" value="WH_DNA-bd_sf"/>
</dbReference>
<dbReference type="NCBIfam" id="NF000868">
    <property type="entry name" value="PRK00080.1"/>
    <property type="match status" value="1"/>
</dbReference>
<dbReference type="NCBIfam" id="TIGR00635">
    <property type="entry name" value="ruvB"/>
    <property type="match status" value="1"/>
</dbReference>
<dbReference type="PANTHER" id="PTHR42848">
    <property type="match status" value="1"/>
</dbReference>
<dbReference type="PANTHER" id="PTHR42848:SF1">
    <property type="entry name" value="HOLLIDAY JUNCTION BRANCH MIGRATION COMPLEX SUBUNIT RUVB"/>
    <property type="match status" value="1"/>
</dbReference>
<dbReference type="Pfam" id="PF17864">
    <property type="entry name" value="AAA_lid_4"/>
    <property type="match status" value="1"/>
</dbReference>
<dbReference type="Pfam" id="PF05491">
    <property type="entry name" value="RuvB_C"/>
    <property type="match status" value="1"/>
</dbReference>
<dbReference type="Pfam" id="PF05496">
    <property type="entry name" value="RuvB_N"/>
    <property type="match status" value="1"/>
</dbReference>
<dbReference type="SMART" id="SM00382">
    <property type="entry name" value="AAA"/>
    <property type="match status" value="1"/>
</dbReference>
<dbReference type="SUPFAM" id="SSF52540">
    <property type="entry name" value="P-loop containing nucleoside triphosphate hydrolases"/>
    <property type="match status" value="1"/>
</dbReference>
<dbReference type="SUPFAM" id="SSF46785">
    <property type="entry name" value="Winged helix' DNA-binding domain"/>
    <property type="match status" value="1"/>
</dbReference>